<proteinExistence type="evidence at protein level"/>
<protein>
    <recommendedName>
        <fullName evidence="18">SPI-1 type 3 secretion system needle filament protein</fullName>
        <shortName evidence="18">T3SS-1 needle filament protein</shortName>
    </recommendedName>
</protein>
<keyword id="KW-0002">3D-structure</keyword>
<keyword id="KW-0653">Protein transport</keyword>
<keyword id="KW-1185">Reference proteome</keyword>
<keyword id="KW-0964">Secreted</keyword>
<keyword id="KW-0813">Transport</keyword>
<keyword id="KW-0843">Virulence</keyword>
<reference key="1">
    <citation type="journal article" date="1995" name="Mol. Microbiol.">
        <title>PhoP/PhoQ transcriptional repression of Salmonella typhimurium invasion genes: evidence for a role in protein secretion.</title>
        <authorList>
            <person name="Pegues D.A."/>
            <person name="Hantman M.J."/>
            <person name="Behlau I."/>
            <person name="Miller S.I."/>
        </authorList>
    </citation>
    <scope>NUCLEOTIDE SEQUENCE [GENOMIC DNA]</scope>
    <scope>INDUCTION</scope>
    <source>
        <strain>ATCC 14028s / SGSG 2262</strain>
    </source>
</reference>
<reference key="2">
    <citation type="journal article" date="2001" name="Nature">
        <title>Complete genome sequence of Salmonella enterica serovar Typhimurium LT2.</title>
        <authorList>
            <person name="McClelland M."/>
            <person name="Sanderson K.E."/>
            <person name="Spieth J."/>
            <person name="Clifton S.W."/>
            <person name="Latreille P."/>
            <person name="Courtney L."/>
            <person name="Porwollik S."/>
            <person name="Ali J."/>
            <person name="Dante M."/>
            <person name="Du F."/>
            <person name="Hou S."/>
            <person name="Layman D."/>
            <person name="Leonard S."/>
            <person name="Nguyen C."/>
            <person name="Scott K."/>
            <person name="Holmes A."/>
            <person name="Grewal N."/>
            <person name="Mulvaney E."/>
            <person name="Ryan E."/>
            <person name="Sun H."/>
            <person name="Florea L."/>
            <person name="Miller W."/>
            <person name="Stoneking T."/>
            <person name="Nhan M."/>
            <person name="Waterston R."/>
            <person name="Wilson R.K."/>
        </authorList>
    </citation>
    <scope>NUCLEOTIDE SEQUENCE [LARGE SCALE GENOMIC DNA]</scope>
    <source>
        <strain>LT2 / SGSC1412 / ATCC 700720</strain>
    </source>
</reference>
<reference key="3">
    <citation type="journal article" date="2003" name="J. Bacteriol.">
        <title>Synthesis and localization of the Salmonella SPI-1 type III secretion needle complex proteins PrgI and PrgJ.</title>
        <authorList>
            <person name="Sukhan A."/>
            <person name="Kubori T."/>
            <person name="Galan J.E."/>
        </authorList>
    </citation>
    <scope>FUNCTION</scope>
    <scope>SUBCELLULAR LOCATION</scope>
</reference>
<reference key="4">
    <citation type="journal article" date="2006" name="Protein Sci.">
        <title>Physical characterization of MxiH and PrgI, the needle component of the type III secretion apparatus from Shigella and Salmonella.</title>
        <authorList>
            <person name="Darboe N."/>
            <person name="Kenjale R."/>
            <person name="Picking W.L."/>
            <person name="Picking W.D."/>
            <person name="Middaugh C.R."/>
        </authorList>
    </citation>
    <scope>FUNCTION</scope>
    <scope>SUBUNIT</scope>
    <scope>DOMAIN</scope>
    <scope>MUTAGENESIS OF 76-ILE--ARG-80</scope>
</reference>
<reference key="5">
    <citation type="journal article" date="2014" name="Infect. Immun.">
        <title>Type III secretion needle proteins induce cell signaling and cytokine secretion via Toll-like receptors.</title>
        <authorList>
            <person name="Jessen D.L."/>
            <person name="Osei-Owusu P."/>
            <person name="Toosky M."/>
            <person name="Roughead W."/>
            <person name="Bradley D.S."/>
            <person name="Nilles M.L."/>
        </authorList>
    </citation>
    <scope>FUNCTION IN INDUCTION OF HOST CELLULAR RESPONSES</scope>
</reference>
<reference key="6">
    <citation type="journal article" date="1998" name="Microbiol. Mol. Biol. Rev.">
        <title>Type III protein secretion systems in bacterial pathogens of animals and plants.</title>
        <authorList>
            <person name="Hueck C.J."/>
        </authorList>
    </citation>
    <scope>REVIEW</scope>
    <scope>NOMENCLATURE</scope>
</reference>
<reference key="7">
    <citation type="journal article" date="2018" name="FEMS Microbiol. Lett.">
        <title>Bacterial type III secretion systems: a complex device for the delivery of bacterial effector proteins into eukaryotic host cells.</title>
        <authorList>
            <person name="Wagner S."/>
            <person name="Grin I."/>
            <person name="Malmsheimer S."/>
            <person name="Singh N."/>
            <person name="Torres-Vargas C.E."/>
            <person name="Westerhausen S."/>
        </authorList>
    </citation>
    <scope>REVIEW</scope>
    <scope>SUBUNIT</scope>
</reference>
<reference evidence="19" key="8">
    <citation type="journal article" date="2007" name="J. Mol. Biol.">
        <title>Differences in the electrostatic surfaces of the type III secretion needle proteins PrgI, BsaL, and MxiH.</title>
        <authorList>
            <person name="Wang Y."/>
            <person name="Ouellette A.N."/>
            <person name="Egan C.W."/>
            <person name="Rathinavelan T."/>
            <person name="Im W."/>
            <person name="De Guzman R.N."/>
        </authorList>
    </citation>
    <scope>STRUCTURE BY NMR OF 1-75</scope>
    <scope>FUNCTION</scope>
    <scope>DOMAIN</scope>
    <scope>DISRUPTION PHENOTYPE</scope>
    <scope>MUTAGENESIS OF GLN-26; LYS-50; ARG-58 AND 76-ILE--ARG-80</scope>
</reference>
<reference evidence="20 23" key="9">
    <citation type="journal article" date="2010" name="Nat. Struct. Mol. Biol.">
        <title>Protein refolding is required for assembly of the type three secretion needle.</title>
        <authorList>
            <person name="Poyraz O."/>
            <person name="Schmidt H."/>
            <person name="Seidel K."/>
            <person name="Delissen F."/>
            <person name="Ader C."/>
            <person name="Tenenboim H."/>
            <person name="Goosmann C."/>
            <person name="Laube B."/>
            <person name="Thunemann A.F."/>
            <person name="Zychlinsky A."/>
            <person name="Baldus M."/>
            <person name="Lange A."/>
            <person name="Griesinger C."/>
            <person name="Kolbe M."/>
        </authorList>
    </citation>
    <scope>STRUCTURE BY NMR</scope>
    <scope>SUBUNIT</scope>
</reference>
<reference evidence="24 25" key="10">
    <citation type="journal article" date="2011" name="PLoS Pathog.">
        <title>Crystal structure of PrgI-SipD: insight into a secretion competent state of the type three secretion system needle tip and its interaction with host ligands.</title>
        <authorList>
            <person name="Lunelli M."/>
            <person name="Hurwitz R."/>
            <person name="Lambers J."/>
            <person name="Kolbe M."/>
        </authorList>
    </citation>
    <scope>X-RAY CRYSTALLOGRAPHY (2.19 ANGSTROMS) IN COMPLEX WITH SIPD/SCTA AND DEOXYCHOLATE</scope>
    <scope>ACTIVITY REGULATION</scope>
    <scope>INTERACTION WITH SIPD/SCTA</scope>
</reference>
<reference evidence="21" key="11">
    <citation type="journal article" date="2012" name="Nature">
        <title>Atomic model of the type III secretion system needle.</title>
        <authorList>
            <person name="Loquet A."/>
            <person name="Sgourakis N.G."/>
            <person name="Gupta R."/>
            <person name="Giller K."/>
            <person name="Riedel D."/>
            <person name="Goosmann C."/>
            <person name="Griesinger C."/>
            <person name="Kolbe M."/>
            <person name="Baker D."/>
            <person name="Becker S."/>
            <person name="Lange A."/>
        </authorList>
    </citation>
    <scope>STRUCTURE BY NMR</scope>
    <scope>FUNCTION</scope>
    <scope>SUBUNIT</scope>
    <scope>DOMAIN</scope>
    <scope>MUTAGENESIS OF TRP-5; TYR-8; VAL-20; ILE-76 AND PHE-79</scope>
</reference>
<reference key="12">
    <citation type="journal article" date="2012" name="Nature">
        <authorList>
            <person name="Loquet A."/>
            <person name="Sgourakis N.G."/>
            <person name="Gupta R."/>
            <person name="Giller K."/>
            <person name="Riedel D."/>
            <person name="Goosmann C."/>
            <person name="Griesinger C."/>
            <person name="Kolbe M."/>
            <person name="Baker D."/>
            <person name="Becker S."/>
            <person name="Lange A."/>
        </authorList>
    </citation>
    <scope>ERRATUM OF PUBMED:22699623</scope>
</reference>
<reference evidence="22" key="13">
    <citation type="journal article" date="2013" name="J. Am. Chem. Soc.">
        <title>Atomic structure and handedness of the building block of a biological assembly.</title>
        <authorList>
            <person name="Loquet A."/>
            <person name="Habenstein B."/>
            <person name="Chevelkov V."/>
            <person name="Vasa S.K."/>
            <person name="Giller K."/>
            <person name="Becker S."/>
            <person name="Lange A."/>
        </authorList>
    </citation>
    <scope>STRUCTURE BY NMR</scope>
</reference>
<reference evidence="26" key="14">
    <citation type="journal article" date="2018" name="Nat. Commun.">
        <title>Cryo-EM analysis of the T3S injectisome reveals the structure of the needle and open secretin.</title>
        <authorList>
            <person name="Hu J."/>
            <person name="Worrall L.J."/>
            <person name="Hong C."/>
            <person name="Vuckovic M."/>
            <person name="Atkinson C.E."/>
            <person name="Caveney N."/>
            <person name="Yu Z."/>
            <person name="Strynadka N.C.J."/>
        </authorList>
    </citation>
    <scope>STRUCTURE BY ELECTRON MICROSCOPY (3.30 ANGSTROMS)</scope>
    <scope>FUNCTION</scope>
    <scope>SUBUNIT</scope>
    <scope>DOMAIN</scope>
</reference>
<reference evidence="31 32 33" key="15">
    <citation type="journal article" date="2019" name="Nat. Microbiol.">
        <title>T3S injectisome needle complex structures in four distinct states reveal the basis of membrane coupling and assembly.</title>
        <authorList>
            <person name="Hu J."/>
            <person name="Worrall L.J."/>
            <person name="Vuckovic M."/>
            <person name="Hong C."/>
            <person name="Deng W."/>
            <person name="Atkinson C.E."/>
            <person name="Brett Finlay B."/>
            <person name="Yu Z."/>
            <person name="Strynadka N.C.J."/>
        </authorList>
    </citation>
    <scope>STRUCTURE BY ELECTRON MICROSCOPY (3.80 ANGSTROMS)</scope>
    <scope>SUBUNIT</scope>
</reference>
<reference evidence="27 28 29 30" key="16">
    <citation type="journal article" date="2019" name="PLoS Biol.">
        <title>A polymorphic helix of a Salmonella needle protein relays signals defining distinct steps in type III secretion.</title>
        <authorList>
            <person name="Guo E.Z."/>
            <person name="Desrosiers D.C."/>
            <person name="Zalesak J."/>
            <person name="Tolchard J."/>
            <person name="Berbon M."/>
            <person name="Habenstein B."/>
            <person name="Marlovits T."/>
            <person name="Loquet A."/>
            <person name="Galan J.E."/>
        </authorList>
    </citation>
    <scope>STRUCTURE BY ELECTRON MICROSCOPY (2.90 ANGSTROMS) OF WILD-TYPE AND MUTANTS ALA-49 AND ALA-67</scope>
    <scope>FUNCTION</scope>
    <scope>SUBUNIT</scope>
    <scope>MUTAGENESIS OF THR-3; LEU-9; ASP-10; ASP-11; PHE-16; VAL-20; LEU-31; SER-49; GLU-53; ASN-55; LEU-56; ARG-58; ASN-63; VAL-65; LYS-66; VAL-67; ASP-70; ILE-75; GLN-77; ASN-78 AND ARG-80</scope>
</reference>
<reference evidence="34" key="17">
    <citation type="journal article" date="2021" name="Biochem. Biophys. Rep.">
        <title>Helical reconstruction of Salmonella and Shigella needle filaments attached to type 3 basal bodies.</title>
        <authorList>
            <person name="Kotov V."/>
            <person name="Lunelli M."/>
            <person name="Wald J."/>
            <person name="Kolbe M."/>
            <person name="Marlovits T.C."/>
        </authorList>
    </citation>
    <scope>STRUCTURE BY ELECTRON MICROSCOPY (3.60 ANGSTROMS) OF NEEDLE FILAMENTS ATTACHED TO THE BASAL BODY</scope>
    <scope>SUBUNIT</scope>
</reference>
<reference evidence="35 36 37" key="18">
    <citation type="journal article" date="2021" name="Nat. Commun.">
        <title>Substrate-engaged type III secretion system structures reveal gating mechanism for unfolded protein translocation.</title>
        <authorList>
            <person name="Miletic S."/>
            <person name="Fahrenkamp D."/>
            <person name="Goessweiner-Mohr N."/>
            <person name="Wald J."/>
            <person name="Pantel M."/>
            <person name="Vesper O."/>
            <person name="Kotov V."/>
            <person name="Marlovits T.C."/>
        </authorList>
    </citation>
    <scope>STRUCTURE BY ELECTRON MICROSCOPY (3.30 ANGSTROMS) OF SUBSTRATE-ENGAGED NEEDLE COMPLEX</scope>
    <scope>FUNCTION</scope>
    <scope>SUBUNIT</scope>
    <source>
        <strain>SB905</strain>
    </source>
</reference>
<reference evidence="38" key="19">
    <citation type="journal article" date="2021" name="Proc. Natl. Acad. Sci. U.S.A.">
        <title>Cryo-EM structure of the needle filament tip complex of the Salmonella type III secretion injectisome.</title>
        <authorList>
            <person name="Guo E.Z."/>
            <person name="Galan J.E."/>
        </authorList>
    </citation>
    <scope>STRUCTURE BY ELECTRON MICROSCOPY (3.90 ANGSTROMS) OF THE NEEDLE FILAMENT TIP COMPLEX</scope>
    <scope>SUBUNIT</scope>
    <scope>INTERACTION WITH SIPD/SCTA</scope>
    <scope>DOMAIN</scope>
    <source>
        <strain>SL1344</strain>
    </source>
</reference>
<name>SCTF1_SALTY</name>
<comment type="function">
    <text evidence="1 2 3 6 9 10 12">Component of the type III secretion system (T3SS), also called injectisome, which is used to inject bacterial effector proteins into eukaryotic host cells (PubMed:12754250, PubMed:16501225, PubMed:30242280, PubMed:33750771). PrgI/SctF1 forms the external needle filament that protrudes from the bacterial surface (PubMed:12754250, PubMed:16501225, PubMed:22699623, PubMed:30242280, PubMed:31260457, PubMed:33750771). Is probably involved in the transduction of an activating signal, thought to be mediated by the distal tip of the needle filament, to the secretion machine (PubMed:31260457). Required for invasion of epithelial cells (PubMed:17617421). Required for the secretion of the effector protein SptP (PubMed:31260457, PubMed:33750771).</text>
</comment>
<comment type="function">
    <text evidence="7">During infection, can induce innate immune responses (PubMed:24643544). The needle proteins interact with host TLR2 or TLR4, and induce signaling by NF-kappa-B and/or AP-1 (PubMed:24643544). This activation is MyD88 dependent and results in increased expression of cytokines, including TNF-alpha, IL-6 and IL-8 (PubMed:24643544).</text>
</comment>
<comment type="activity regulation">
    <text evidence="5">Binding of bile salts, including deoxycholate, to the PrgI:SipD interface may inhibit the T3SS function.</text>
</comment>
<comment type="subunit">
    <text evidence="2 4 5 6 8 9 10 11 12 13 14">The core secretion machinery of the T3SS is composed of approximately 20 different proteins, including cytoplasmic components, a base, an export apparatus and a needle (PubMed:30107569, PubMed:30242280, PubMed:31427728). This subunit polymerizes and forms the helical needle filament (PubMed:16501225, PubMed:20543831, PubMed:22699623, PubMed:30242280, PubMed:31260457, PubMed:31427728, PubMed:33750771, PubMed:34258394, PubMed:34706941). Interacts with the needle tip protein SipD/SctA (PubMed:21829362, PubMed:34706941). Interacts with the needle adapter protein PrgJ/SctI, the secretin InvG/SctC and the minor export apparatus protein SpaP/SctR (PubMed:33750771). In vitro, the needle protomer refolds spontaneously to extend the needle from the distal end (PubMed:20543831).</text>
</comment>
<comment type="interaction">
    <interactant intactId="EBI-15861111">
        <id>P41784</id>
    </interactant>
    <interactant intactId="EBI-15861111">
        <id>P41784</id>
        <label>sctF1</label>
    </interactant>
    <organismsDiffer>false</organismsDiffer>
    <experiments>8</experiments>
</comment>
<comment type="subcellular location">
    <subcellularLocation>
        <location evidence="1">Secreted</location>
    </subcellularLocation>
    <subcellularLocation>
        <location evidence="1">Cell surface</location>
    </subcellularLocation>
</comment>
<comment type="induction">
    <text evidence="15">Negatively regulated by PhoP-PhoQ.</text>
</comment>
<comment type="domain">
    <text evidence="2 3 6 9 14">Deletion of the last five residues prevents self-association and yields monomeric proteins that allow biophysical studies (PubMed:16501225, PubMed:17617421). Forms a right-handed helical assembly with roughly 11 subunits per two turns (PubMed:22699623, PubMed:30242280). The location of the negatively charged surfaces are radically different among the needle filament proteins PrgI, BsaL and MxiH (PubMed:17617421). In PrgI, the major negatively charged surface is not on the 'face' but instead is on the 'side' of the two-helix bundle, and only residues from helix alpha1 contribute to this negative region (PubMed:17617421). The insertion of the needle tip complex on the distal end of the filament results in significant conformational changes in PrgI/SctF (PubMed:34706941).</text>
</comment>
<comment type="disruption phenotype">
    <text evidence="3">The null mutant strain is non-invasive.</text>
</comment>
<comment type="miscellaneous">
    <text evidence="1">The levels of PrgI/SctF are reduced in an invA/sctV mutant, probably due to protein instability, and are increased in an invJ/sctP mutant.</text>
</comment>
<comment type="similarity">
    <text evidence="18">Belongs to the SctF family.</text>
</comment>
<feature type="chain" id="PRO_0000058572" description="SPI-1 type 3 secretion system needle filament protein">
    <location>
        <begin position="1"/>
        <end position="80"/>
    </location>
</feature>
<feature type="mutagenesis site" description="Can only secrete early substrates such as InvJ/ScpT, PrgJ/SctI and PrgI/SctF. Can polymerize into filaments in vitro and in vivo, but the stability of the filaments is compromised." evidence="10">
    <original>T</original>
    <variation>A</variation>
    <location>
        <position position="3"/>
    </location>
</feature>
<feature type="mutagenesis site" description="Abrogates host cell invasion and effector secretion; when associated with A-8. Can secrete effector proteins; when associated with A-20." evidence="6">
    <original>W</original>
    <variation>A</variation>
    <location>
        <position position="5"/>
    </location>
</feature>
<feature type="mutagenesis site" description="Decreases invasiveness. Abrogates host cell invasion and effector secretion; when associated with A-5." evidence="6">
    <original>Y</original>
    <variation>A</variation>
    <location>
        <position position="8"/>
    </location>
</feature>
<feature type="mutagenesis site" description="Can only secrete early substrates such as InvJ/ScpT, PrgJ/SctI and PrgI/SctF. Can polymerize into filaments in vitro, but not in vivo. Cannot enter cultured epithelial cells." evidence="10">
    <original>L</original>
    <variation>A</variation>
    <location>
        <position position="9"/>
    </location>
</feature>
<feature type="mutagenesis site" description="Exhibits constitutive secretion of substrates. Retains the ability to display SipD/SctA at the tip of the needle filament." evidence="10">
    <original>D</original>
    <variation>A</variation>
    <location>
        <position position="10"/>
    </location>
</feature>
<feature type="mutagenesis site" description="Exhibits constitutive secretion of substrates. Retains the ability to display SipD/SctA at the tip of the needle filament." evidence="10">
    <original>D</original>
    <variation>A</variation>
    <location>
        <position position="11"/>
    </location>
</feature>
<feature type="mutagenesis site" description="Can only secrete early substrates such as InvJ/ScpT, PrgJ/SctI and PrgI/SctF. Can polymerize into filaments in vitro, but not in vivo. Cannot enter cultured epithelial cells." evidence="10">
    <original>F</original>
    <variation>A</variation>
    <location>
        <position position="16"/>
    </location>
</feature>
<feature type="mutagenesis site" description="Can secrete effector proteins; when associated with A-5. Exhibits constitutive secretion of substrates. Retains the ability to display SipD/SctA at the tip of the needle filament." evidence="6 10">
    <original>V</original>
    <variation>A</variation>
    <location>
        <position position="20"/>
    </location>
</feature>
<feature type="mutagenesis site" description="Non-invasive phenotype." evidence="3">
    <original>Q</original>
    <variation>A</variation>
    <location>
        <position position="26"/>
    </location>
</feature>
<feature type="mutagenesis site" description="Has wild-type invasiveness." evidence="3">
    <original>Q</original>
    <variation>E</variation>
    <location>
        <position position="26"/>
    </location>
</feature>
<feature type="mutagenesis site" description="Exhibits constitutive secretion of substrates. Does not display SipD/SctA at the tip of the needle filament. Is non-invasive. Can polymerize into filaments in vitro." evidence="10">
    <original>L</original>
    <variation>A</variation>
    <location>
        <position position="31"/>
    </location>
</feature>
<feature type="mutagenesis site" description="Exhibits constitutive secretion of substrates. Retains the ability to display SipD/SctA at the tip of the needle filament." evidence="10">
    <original>S</original>
    <variation>A</variation>
    <location>
        <position position="49"/>
    </location>
</feature>
<feature type="mutagenesis site" description="Non-invasive phenotype." evidence="3">
    <original>K</original>
    <variation>D</variation>
    <location>
        <position position="50"/>
    </location>
</feature>
<feature type="mutagenesis site" description="Has wild-type invasiveness." evidence="3">
    <original>K</original>
    <variation>L</variation>
    <location>
        <position position="50"/>
    </location>
</feature>
<feature type="mutagenesis site" description="Exhibits constitutive secretion of substrates. Retains the ability to display SipD/SctA at the tip of the needle filament. Does not yield assembled filaments in vitro." evidence="10">
    <original>E</original>
    <variation>A</variation>
    <location>
        <position position="53"/>
    </location>
</feature>
<feature type="mutagenesis site" description="Exhibits constitutive secretion of substrates. Retains the ability to display SipD/SctA at the tip of the needle filament." evidence="10">
    <original>N</original>
    <variation>A</variation>
    <location>
        <position position="55"/>
    </location>
</feature>
<feature type="mutagenesis site" description="Exhibits constitutive secretion of substrates. Does not display SipD/SctA at the tip of the needle filament. Is non-invasive. Can polymerize into filaments in vitro." evidence="10">
    <original>L</original>
    <variation>A</variation>
    <location>
        <position position="56"/>
    </location>
</feature>
<feature type="mutagenesis site" description="Exhibits constitutive secretion of substrates. Retains the ability to display SipD/SctA at the tip of the needle filament." evidence="10">
    <original>R</original>
    <variation>A</variation>
    <location>
        <position position="58"/>
    </location>
</feature>
<feature type="mutagenesis site" description="Non-invasive phenotype." evidence="3">
    <original>R</original>
    <variation>L</variation>
    <location>
        <position position="58"/>
    </location>
</feature>
<feature type="mutagenesis site" description="Exhibits constitutive secretion of substrates. Retains the ability to display SipD/SctA at the tip of the needle filament." evidence="10">
    <original>N</original>
    <variation>A</variation>
    <location>
        <position position="63"/>
    </location>
</feature>
<feature type="mutagenesis site" description="Can only secrete early substrates such as InvJ/ScpT, PrgJ/SctI and PrgI/SctF. Does not yield assembled filaments in vitro. Cannot enter cultured epithelial cells." evidence="10">
    <original>V</original>
    <variation>A</variation>
    <location>
        <position position="65"/>
    </location>
</feature>
<feature type="mutagenesis site" description="Can secrete only early substrates. Can assemble needle filaments in vitro, but shows a filament assembly defect in vivo. Can invade cultured epithelial cells." evidence="10">
    <original>K</original>
    <variation>E</variation>
    <location>
        <position position="66"/>
    </location>
</feature>
<feature type="mutagenesis site" description="Shows a specific deficiency in the secretion of the translocase SipB/SctE. Shows fully assembled needle complexes. Is able to invade cultured epithelial cells." evidence="10">
    <original>V</original>
    <variation>A</variation>
    <location>
        <position position="67"/>
    </location>
</feature>
<feature type="mutagenesis site" description="Shows a specific deficiency in the secretion of the translocase SipB/SctE. Shows fully assembled needle complexes, but has a reduced number of needle filaments. Is drastically affected in its ability to enter into host cells." evidence="10">
    <original>D</original>
    <variation>A</variation>
    <location>
        <position position="70"/>
    </location>
</feature>
<feature type="mutagenesis site" description="Can secrete only early substrates. Can assemble needle filaments in vitro, but shows a filament assembly defect in vivo. Can invade cultured epithelial cells." evidence="10">
    <original>D</original>
    <variation>K</variation>
    <location>
        <position position="70"/>
    </location>
</feature>
<feature type="mutagenesis site" description="Shows a specific deficiency in the secretion of the translocase SipB/SctE. Retains the ability to assemble needle complexes, but is not able to invade cultured epithelial cells." evidence="10">
    <original>D</original>
    <variation>L</variation>
    <location>
        <position position="70"/>
    </location>
</feature>
<feature type="mutagenesis site" description="Cannot secrete the translocases SipB/SctE and SipC/SctB. Shows increased secretion of SptP. Retains the ability to assemble needle complexes, but is not able to invade cultured epithelial cells." evidence="10">
    <original>D</original>
    <variation>N</variation>
    <location>
        <position position="70"/>
    </location>
</feature>
<feature type="mutagenesis site" description="Shows a specific deficiency in the secretion of the translocase SipB/SctE. Shows fully assembled needle complexes, but has a reduced number of needle filaments. Is able to invade cultured epithelial cells." evidence="10">
    <original>I</original>
    <variation>A</variation>
    <location>
        <position position="75"/>
    </location>
</feature>
<feature type="mutagenesis site" description="Cannot polymerize, forms only monomers." evidence="2 3">
    <location>
        <begin position="76"/>
        <end position="80"/>
    </location>
</feature>
<feature type="mutagenesis site" description="Abrogates host cell invasion and effector secretion; when associated with A-79." evidence="6">
    <original>I</original>
    <variation>A</variation>
    <location>
        <position position="76"/>
    </location>
</feature>
<feature type="mutagenesis site" description="Shows a specific deficiency in the secretion of the translocase SipB/SctE. Shows fully assembled needle complexes. Is able to invade cultured epithelial cells." evidence="10">
    <original>Q</original>
    <variation>A</variation>
    <location>
        <position position="77"/>
    </location>
</feature>
<feature type="mutagenesis site" description="Can secrete only early substrates." evidence="10">
    <original>Q</original>
    <variation>E</variation>
    <location>
        <position position="77"/>
    </location>
</feature>
<feature type="mutagenesis site" description="Shows a specific deficiency in the secretion of the translocase SipB/SctE. Retains the ability to assemble needle complexes, but is not able to invade cultured epithelial cells." evidence="10">
    <original>Q</original>
    <variation>K</variation>
    <location>
        <position position="77"/>
    </location>
</feature>
<feature type="mutagenesis site" description="Cannot secrete the translocases SipB/SctE and SipC/SctB. Retains the ability to assemble needle complexes, but is not able to invade cultured epithelial cells." evidence="10">
    <original>Q</original>
    <variation>M</variation>
    <location>
        <position position="77"/>
    </location>
</feature>
<feature type="mutagenesis site" description="Cannot secrete the translocases SipB/SctE and SipC/SctB. Shows increased secretion of SptP. Retains the ability to assemble needle complexes, but is not able to invade cultured epithelial cells." evidence="10">
    <original>Q</original>
    <variation>R</variation>
    <location>
        <position position="77"/>
    </location>
</feature>
<feature type="mutagenesis site" description="Exhibits constitutive secretion of substrates. Retains the ability to display SipD/SctA at the tip of the needle filament." evidence="10">
    <original>N</original>
    <variation>A</variation>
    <location>
        <position position="78"/>
    </location>
</feature>
<feature type="mutagenesis site" description="Abrogates host cell invasion and effector secretion; when associated with A-76." evidence="6">
    <original>F</original>
    <variation>A</variation>
    <location>
        <position position="79"/>
    </location>
</feature>
<feature type="mutagenesis site" description="Cannot secrete the translocase SipB/SctE and SptP. Retains the ability to assemble needle complexes, but is not able to invade cultured epithelial cells." evidence="10">
    <original>R</original>
    <variation>E</variation>
    <location>
        <position position="80"/>
    </location>
</feature>
<feature type="mutagenesis site" description="Exhibits constitutive secretion of substrates. Can invade cultured epithelial cells." evidence="10">
    <original>R</original>
    <variation>K</variation>
    <location>
        <position position="80"/>
    </location>
</feature>
<feature type="helix" evidence="39">
    <location>
        <begin position="5"/>
        <end position="7"/>
    </location>
</feature>
<feature type="helix" evidence="41">
    <location>
        <begin position="9"/>
        <end position="36"/>
    </location>
</feature>
<feature type="strand" evidence="40">
    <location>
        <begin position="37"/>
        <end position="39"/>
    </location>
</feature>
<feature type="helix" evidence="41">
    <location>
        <begin position="41"/>
        <end position="62"/>
    </location>
</feature>
<feature type="helix" evidence="41">
    <location>
        <begin position="64"/>
        <end position="75"/>
    </location>
</feature>
<feature type="helix" evidence="42">
    <location>
        <begin position="77"/>
        <end position="79"/>
    </location>
</feature>
<organism>
    <name type="scientific">Salmonella typhimurium (strain LT2 / SGSC1412 / ATCC 700720)</name>
    <dbReference type="NCBI Taxonomy" id="99287"/>
    <lineage>
        <taxon>Bacteria</taxon>
        <taxon>Pseudomonadati</taxon>
        <taxon>Pseudomonadota</taxon>
        <taxon>Gammaproteobacteria</taxon>
        <taxon>Enterobacterales</taxon>
        <taxon>Enterobacteriaceae</taxon>
        <taxon>Salmonella</taxon>
    </lineage>
</organism>
<evidence type="ECO:0000269" key="1">
    <source>
    </source>
</evidence>
<evidence type="ECO:0000269" key="2">
    <source>
    </source>
</evidence>
<evidence type="ECO:0000269" key="3">
    <source>
    </source>
</evidence>
<evidence type="ECO:0000269" key="4">
    <source>
    </source>
</evidence>
<evidence type="ECO:0000269" key="5">
    <source>
    </source>
</evidence>
<evidence type="ECO:0000269" key="6">
    <source>
    </source>
</evidence>
<evidence type="ECO:0000269" key="7">
    <source>
    </source>
</evidence>
<evidence type="ECO:0000269" key="8">
    <source>
    </source>
</evidence>
<evidence type="ECO:0000269" key="9">
    <source>
    </source>
</evidence>
<evidence type="ECO:0000269" key="10">
    <source>
    </source>
</evidence>
<evidence type="ECO:0000269" key="11">
    <source>
    </source>
</evidence>
<evidence type="ECO:0000269" key="12">
    <source>
    </source>
</evidence>
<evidence type="ECO:0000269" key="13">
    <source>
    </source>
</evidence>
<evidence type="ECO:0000269" key="14">
    <source>
    </source>
</evidence>
<evidence type="ECO:0000269" key="15">
    <source>
    </source>
</evidence>
<evidence type="ECO:0000303" key="16">
    <source>
    </source>
</evidence>
<evidence type="ECO:0000303" key="17">
    <source>
    </source>
</evidence>
<evidence type="ECO:0000305" key="18"/>
<evidence type="ECO:0007744" key="19">
    <source>
        <dbReference type="PDB" id="2JOW"/>
    </source>
</evidence>
<evidence type="ECO:0007744" key="20">
    <source>
        <dbReference type="PDB" id="2KV7"/>
    </source>
</evidence>
<evidence type="ECO:0007744" key="21">
    <source>
        <dbReference type="PDB" id="2LPZ"/>
    </source>
</evidence>
<evidence type="ECO:0007744" key="22">
    <source>
        <dbReference type="PDB" id="2MEX"/>
    </source>
</evidence>
<evidence type="ECO:0007744" key="23">
    <source>
        <dbReference type="PDB" id="2X9C"/>
    </source>
</evidence>
<evidence type="ECO:0007744" key="24">
    <source>
        <dbReference type="PDB" id="3ZQB"/>
    </source>
</evidence>
<evidence type="ECO:0007744" key="25">
    <source>
        <dbReference type="PDB" id="3ZQE"/>
    </source>
</evidence>
<evidence type="ECO:0007744" key="26">
    <source>
        <dbReference type="PDB" id="6DWB"/>
    </source>
</evidence>
<evidence type="ECO:0007744" key="27">
    <source>
        <dbReference type="PDB" id="6OFE"/>
    </source>
</evidence>
<evidence type="ECO:0007744" key="28">
    <source>
        <dbReference type="PDB" id="6OFF"/>
    </source>
</evidence>
<evidence type="ECO:0007744" key="29">
    <source>
        <dbReference type="PDB" id="6OFG"/>
    </source>
</evidence>
<evidence type="ECO:0007744" key="30">
    <source>
        <dbReference type="PDB" id="6OFH"/>
    </source>
</evidence>
<evidence type="ECO:0007744" key="31">
    <source>
        <dbReference type="PDB" id="6PEP"/>
    </source>
</evidence>
<evidence type="ECO:0007744" key="32">
    <source>
        <dbReference type="PDB" id="6Q15"/>
    </source>
</evidence>
<evidence type="ECO:0007744" key="33">
    <source>
        <dbReference type="PDB" id="6Q16"/>
    </source>
</evidence>
<evidence type="ECO:0007744" key="34">
    <source>
        <dbReference type="PDB" id="6ZNH"/>
    </source>
</evidence>
<evidence type="ECO:0007744" key="35">
    <source>
        <dbReference type="PDB" id="7AGX"/>
    </source>
</evidence>
<evidence type="ECO:0007744" key="36">
    <source>
        <dbReference type="PDB" id="7AH9"/>
    </source>
</evidence>
<evidence type="ECO:0007744" key="37">
    <source>
        <dbReference type="PDB" id="7AHI"/>
    </source>
</evidence>
<evidence type="ECO:0007744" key="38">
    <source>
        <dbReference type="PDB" id="7RYE"/>
    </source>
</evidence>
<evidence type="ECO:0007829" key="39">
    <source>
        <dbReference type="PDB" id="2JOW"/>
    </source>
</evidence>
<evidence type="ECO:0007829" key="40">
    <source>
        <dbReference type="PDB" id="2KV7"/>
    </source>
</evidence>
<evidence type="ECO:0007829" key="41">
    <source>
        <dbReference type="PDB" id="3ZQE"/>
    </source>
</evidence>
<evidence type="ECO:0007829" key="42">
    <source>
        <dbReference type="PDB" id="6OFG"/>
    </source>
</evidence>
<sequence>MATPWSGYLDDVSAKFDTGVDNLQTQVTEALDKLAAKPSDPALLAAYQSKLSEYNLYRNAQSNTVKVFKDIDAAIIQNFR</sequence>
<accession>P41784</accession>
<dbReference type="EMBL" id="U21676">
    <property type="protein sequence ID" value="AAB60189.1"/>
    <property type="molecule type" value="Genomic_DNA"/>
</dbReference>
<dbReference type="EMBL" id="AE006468">
    <property type="protein sequence ID" value="AAL21753.1"/>
    <property type="molecule type" value="Genomic_DNA"/>
</dbReference>
<dbReference type="PIR" id="S69784">
    <property type="entry name" value="S69784"/>
</dbReference>
<dbReference type="RefSeq" id="NP_461794.1">
    <property type="nucleotide sequence ID" value="NC_003197.2"/>
</dbReference>
<dbReference type="RefSeq" id="WP_000235228.1">
    <property type="nucleotide sequence ID" value="NC_003197.2"/>
</dbReference>
<dbReference type="PDB" id="2JOW">
    <property type="method" value="NMR"/>
    <property type="chains" value="A=1-75"/>
</dbReference>
<dbReference type="PDB" id="2KV7">
    <property type="method" value="NMR"/>
    <property type="chains" value="A=1-80"/>
</dbReference>
<dbReference type="PDB" id="2LPZ">
    <property type="method" value="NMR"/>
    <property type="chains" value="A/B/C/D/E/F/G/H/I/J/K/L/M/N/O/P/Q/R/S/T/U/V/W/X/Y/Z/a/b/c=1-80"/>
</dbReference>
<dbReference type="PDB" id="2MEX">
    <property type="method" value="NMR"/>
    <property type="chains" value="A/B/C/D=1-80"/>
</dbReference>
<dbReference type="PDB" id="2X9C">
    <property type="method" value="X-ray"/>
    <property type="resolution" value="2.45 A"/>
    <property type="chains" value="A/B=1-80"/>
</dbReference>
<dbReference type="PDB" id="3ZQB">
    <property type="method" value="X-ray"/>
    <property type="resolution" value="2.40 A"/>
    <property type="chains" value="A/B=1-80"/>
</dbReference>
<dbReference type="PDB" id="3ZQE">
    <property type="method" value="X-ray"/>
    <property type="resolution" value="2.19 A"/>
    <property type="chains" value="A/B=1-80"/>
</dbReference>
<dbReference type="PDB" id="6DWB">
    <property type="method" value="EM"/>
    <property type="resolution" value="3.30 A"/>
    <property type="chains" value="A/B/C/D/E/F/G/H/I/J/K/L/M/N/O/P/Q/R/S/T/U/V/W/X/Y/Z/a/b/c/d=1-80"/>
</dbReference>
<dbReference type="PDB" id="6OFE">
    <property type="method" value="EM"/>
    <property type="resolution" value="3.61 A"/>
    <property type="chains" value="A/B/C/D/E/F/G/H/I/J/K/L/M/N/O/P/Q/R/S/T=1-80"/>
</dbReference>
<dbReference type="PDB" id="6OFF">
    <property type="method" value="EM"/>
    <property type="resolution" value="3.20 A"/>
    <property type="chains" value="A/B/C/D/E/F/G/H/I/J/K/L/M/N/O/P/Q/R=1-80"/>
</dbReference>
<dbReference type="PDB" id="6OFG">
    <property type="method" value="EM"/>
    <property type="resolution" value="2.90 A"/>
    <property type="chains" value="A/B/C/D/E/F/G/H/I/J/K/L/M/N/O/P/Q/R=1-80"/>
</dbReference>
<dbReference type="PDB" id="6OFH">
    <property type="method" value="EM"/>
    <property type="resolution" value="3.70 A"/>
    <property type="chains" value="D/E/F/G/H/I/J/K/L/M/N/O/P/Q/R/S/T/U/V=1-80"/>
</dbReference>
<dbReference type="PDB" id="6PEP">
    <property type="method" value="EM"/>
    <property type="resolution" value="3.80 A"/>
    <property type="chains" value="AS/AT/AU/AV/AW/AX/AY/AZ/BA/BB/BC/BD/BE=1-80"/>
</dbReference>
<dbReference type="PDB" id="6Q15">
    <property type="method" value="EM"/>
    <property type="resolution" value="5.15 A"/>
    <property type="chains" value="AS/AT/AU/AV/AW/AX/AY/AZ/BA/BB/BC/BD/BE/BF/BG/BH/BI/BJ/BK/BL/BM/BN/BO/BP/BQ/BR/BS/BT/BU/BV=1-80"/>
</dbReference>
<dbReference type="PDB" id="6Q16">
    <property type="method" value="EM"/>
    <property type="resolution" value="4.10 A"/>
    <property type="chains" value="AS/AT/AU/AV/AW/AX/AY/AZ/BA/BB/BC/BD/BE=1-80"/>
</dbReference>
<dbReference type="PDB" id="6ZNH">
    <property type="method" value="EM"/>
    <property type="resolution" value="3.60 A"/>
    <property type="chains" value="A/B/C/D/E/F/G/H/I/J/K/L/M/N/O/P/Q/R/S/T/U/V/W=1-80"/>
</dbReference>
<dbReference type="PDB" id="7AGX">
    <property type="method" value="EM"/>
    <property type="resolution" value="3.60 A"/>
    <property type="chains" value="2A/2B/2C/2D/2E/2F/2G/2H/2I/2J/2K/2L/2M/2N/2O/2P/2Q=1-80"/>
</dbReference>
<dbReference type="PDB" id="7AH9">
    <property type="method" value="EM"/>
    <property type="resolution" value="3.30 A"/>
    <property type="chains" value="2A/2B/2C/2D/2E/2F/2G/2H/2I/2J/2K/2L/2M/2N/2O/2P/2Q/2R/2S/2T/2U/2V/2W/2X/2Y/2Z/3A/3B/3C/3D=1-80"/>
</dbReference>
<dbReference type="PDB" id="7AHI">
    <property type="method" value="EM"/>
    <property type="resolution" value="3.30 A"/>
    <property type="chains" value="2A/2B/2C/2D/2E/2F/2G/2H/2I/2J/2K/2L/2M/2N/2O/2P/2Q/2R/2S/2T/2U/2V/2W/2X/2Y/2Z/3A/3B/3C/3D=1-80"/>
</dbReference>
<dbReference type="PDB" id="7RYE">
    <property type="method" value="EM"/>
    <property type="resolution" value="3.90 A"/>
    <property type="chains" value="A/B/C/D/E/G/H/I/J/K/L/M/N/P/Q/S/T/U/W=1-80"/>
</dbReference>
<dbReference type="PDBsum" id="2JOW"/>
<dbReference type="PDBsum" id="2KV7"/>
<dbReference type="PDBsum" id="2LPZ"/>
<dbReference type="PDBsum" id="2MEX"/>
<dbReference type="PDBsum" id="2X9C"/>
<dbReference type="PDBsum" id="3ZQB"/>
<dbReference type="PDBsum" id="3ZQE"/>
<dbReference type="PDBsum" id="6DWB"/>
<dbReference type="PDBsum" id="6OFE"/>
<dbReference type="PDBsum" id="6OFF"/>
<dbReference type="PDBsum" id="6OFG"/>
<dbReference type="PDBsum" id="6OFH"/>
<dbReference type="PDBsum" id="6PEP"/>
<dbReference type="PDBsum" id="6Q15"/>
<dbReference type="PDBsum" id="6Q16"/>
<dbReference type="PDBsum" id="6ZNH"/>
<dbReference type="PDBsum" id="7AGX"/>
<dbReference type="PDBsum" id="7AH9"/>
<dbReference type="PDBsum" id="7AHI"/>
<dbReference type="PDBsum" id="7RYE"/>
<dbReference type="BMRB" id="P41784"/>
<dbReference type="EMDB" id="EMD-11311"/>
<dbReference type="EMDB" id="EMD-11780"/>
<dbReference type="EMDB" id="EMD-11781"/>
<dbReference type="EMDB" id="EMD-20556"/>
<dbReference type="EMDB" id="EMD-24735"/>
<dbReference type="EMDB" id="EMD-8924"/>
<dbReference type="SMR" id="P41784"/>
<dbReference type="DIP" id="DIP-59025N"/>
<dbReference type="IntAct" id="P41784">
    <property type="interactions" value="2"/>
</dbReference>
<dbReference type="STRING" id="99287.STM2873"/>
<dbReference type="TCDB" id="3.A.6.1.3">
    <property type="family name" value="the type iii (virulence-related) secretory pathway (iiisp) family"/>
</dbReference>
<dbReference type="PaxDb" id="99287-STM2873"/>
<dbReference type="GeneID" id="1254396"/>
<dbReference type="KEGG" id="stm:STM2873"/>
<dbReference type="PATRIC" id="fig|99287.12.peg.3029"/>
<dbReference type="HOGENOM" id="CLU_171855_1_1_6"/>
<dbReference type="OMA" id="TVPNKDW"/>
<dbReference type="BioCyc" id="SENT99287:STM2873-MONOMER"/>
<dbReference type="EvolutionaryTrace" id="P41784"/>
<dbReference type="Proteomes" id="UP000001014">
    <property type="component" value="Chromosome"/>
</dbReference>
<dbReference type="GO" id="GO:0009986">
    <property type="term" value="C:cell surface"/>
    <property type="evidence" value="ECO:0007669"/>
    <property type="project" value="UniProtKB-SubCell"/>
</dbReference>
<dbReference type="GO" id="GO:0005576">
    <property type="term" value="C:extracellular region"/>
    <property type="evidence" value="ECO:0007669"/>
    <property type="project" value="UniProtKB-SubCell"/>
</dbReference>
<dbReference type="GO" id="GO:0030257">
    <property type="term" value="C:type III protein secretion system complex"/>
    <property type="evidence" value="ECO:0007669"/>
    <property type="project" value="InterPro"/>
</dbReference>
<dbReference type="GO" id="GO:0042802">
    <property type="term" value="F:identical protein binding"/>
    <property type="evidence" value="ECO:0000353"/>
    <property type="project" value="IntAct"/>
</dbReference>
<dbReference type="GO" id="GO:0030254">
    <property type="term" value="P:protein secretion by the type III secretion system"/>
    <property type="evidence" value="ECO:0007669"/>
    <property type="project" value="InterPro"/>
</dbReference>
<dbReference type="FunFam" id="1.20.58.90:FF:000006">
    <property type="entry name" value="Type III secretion system needle complex protein"/>
    <property type="match status" value="1"/>
</dbReference>
<dbReference type="Gene3D" id="1.20.58.90">
    <property type="match status" value="1"/>
</dbReference>
<dbReference type="InterPro" id="IPR021123">
    <property type="entry name" value="T3SS_needle-like"/>
</dbReference>
<dbReference type="InterPro" id="IPR037203">
    <property type="entry name" value="T3SS_needle-like_sf"/>
</dbReference>
<dbReference type="InterPro" id="IPR011841">
    <property type="entry name" value="T3SS_needle_YscF"/>
</dbReference>
<dbReference type="NCBIfam" id="TIGR02105">
    <property type="entry name" value="III_needle"/>
    <property type="match status" value="1"/>
</dbReference>
<dbReference type="NCBIfam" id="NF011854">
    <property type="entry name" value="PRK15326.1"/>
    <property type="match status" value="1"/>
</dbReference>
<dbReference type="Pfam" id="PF09392">
    <property type="entry name" value="T3SS_needle_F"/>
    <property type="match status" value="1"/>
</dbReference>
<dbReference type="SUPFAM" id="SSF140129">
    <property type="entry name" value="MxiH-like"/>
    <property type="match status" value="1"/>
</dbReference>
<gene>
    <name evidence="17" type="primary">sctF1</name>
    <name evidence="16" type="synonym">prgI</name>
    <name type="ordered locus">STM2873</name>
</gene>